<gene>
    <name evidence="1" type="primary">rplT</name>
    <name type="ordered locus">Nmul_A0490</name>
</gene>
<organism>
    <name type="scientific">Nitrosospira multiformis (strain ATCC 25196 / NCIMB 11849 / C 71)</name>
    <dbReference type="NCBI Taxonomy" id="323848"/>
    <lineage>
        <taxon>Bacteria</taxon>
        <taxon>Pseudomonadati</taxon>
        <taxon>Pseudomonadota</taxon>
        <taxon>Betaproteobacteria</taxon>
        <taxon>Nitrosomonadales</taxon>
        <taxon>Nitrosomonadaceae</taxon>
        <taxon>Nitrosospira</taxon>
    </lineage>
</organism>
<protein>
    <recommendedName>
        <fullName evidence="1">Large ribosomal subunit protein bL20</fullName>
    </recommendedName>
    <alternativeName>
        <fullName evidence="2">50S ribosomal protein L20</fullName>
    </alternativeName>
</protein>
<evidence type="ECO:0000255" key="1">
    <source>
        <dbReference type="HAMAP-Rule" id="MF_00382"/>
    </source>
</evidence>
<evidence type="ECO:0000305" key="2"/>
<reference key="1">
    <citation type="submission" date="2005-08" db="EMBL/GenBank/DDBJ databases">
        <title>Complete sequence of chromosome 1 of Nitrosospira multiformis ATCC 25196.</title>
        <authorList>
            <person name="Copeland A."/>
            <person name="Lucas S."/>
            <person name="Lapidus A."/>
            <person name="Barry K."/>
            <person name="Detter J.C."/>
            <person name="Glavina T."/>
            <person name="Hammon N."/>
            <person name="Israni S."/>
            <person name="Pitluck S."/>
            <person name="Chain P."/>
            <person name="Malfatti S."/>
            <person name="Shin M."/>
            <person name="Vergez L."/>
            <person name="Schmutz J."/>
            <person name="Larimer F."/>
            <person name="Land M."/>
            <person name="Hauser L."/>
            <person name="Kyrpides N."/>
            <person name="Lykidis A."/>
            <person name="Richardson P."/>
        </authorList>
    </citation>
    <scope>NUCLEOTIDE SEQUENCE [LARGE SCALE GENOMIC DNA]</scope>
    <source>
        <strain>ATCC 25196 / NCIMB 11849 / C 71</strain>
    </source>
</reference>
<dbReference type="EMBL" id="CP000103">
    <property type="protein sequence ID" value="ABB73798.1"/>
    <property type="molecule type" value="Genomic_DNA"/>
</dbReference>
<dbReference type="RefSeq" id="WP_011379852.1">
    <property type="nucleotide sequence ID" value="NC_007614.1"/>
</dbReference>
<dbReference type="SMR" id="Q2YBS3"/>
<dbReference type="STRING" id="323848.Nmul_A0490"/>
<dbReference type="KEGG" id="nmu:Nmul_A0490"/>
<dbReference type="eggNOG" id="COG0292">
    <property type="taxonomic scope" value="Bacteria"/>
</dbReference>
<dbReference type="HOGENOM" id="CLU_123265_0_1_4"/>
<dbReference type="OrthoDB" id="9808966at2"/>
<dbReference type="Proteomes" id="UP000002718">
    <property type="component" value="Chromosome"/>
</dbReference>
<dbReference type="GO" id="GO:1990904">
    <property type="term" value="C:ribonucleoprotein complex"/>
    <property type="evidence" value="ECO:0007669"/>
    <property type="project" value="UniProtKB-KW"/>
</dbReference>
<dbReference type="GO" id="GO:0005840">
    <property type="term" value="C:ribosome"/>
    <property type="evidence" value="ECO:0007669"/>
    <property type="project" value="UniProtKB-KW"/>
</dbReference>
<dbReference type="GO" id="GO:0019843">
    <property type="term" value="F:rRNA binding"/>
    <property type="evidence" value="ECO:0007669"/>
    <property type="project" value="UniProtKB-UniRule"/>
</dbReference>
<dbReference type="GO" id="GO:0003735">
    <property type="term" value="F:structural constituent of ribosome"/>
    <property type="evidence" value="ECO:0007669"/>
    <property type="project" value="InterPro"/>
</dbReference>
<dbReference type="GO" id="GO:0000027">
    <property type="term" value="P:ribosomal large subunit assembly"/>
    <property type="evidence" value="ECO:0007669"/>
    <property type="project" value="UniProtKB-UniRule"/>
</dbReference>
<dbReference type="GO" id="GO:0006412">
    <property type="term" value="P:translation"/>
    <property type="evidence" value="ECO:0007669"/>
    <property type="project" value="InterPro"/>
</dbReference>
<dbReference type="CDD" id="cd07026">
    <property type="entry name" value="Ribosomal_L20"/>
    <property type="match status" value="1"/>
</dbReference>
<dbReference type="FunFam" id="1.10.1900.20:FF:000001">
    <property type="entry name" value="50S ribosomal protein L20"/>
    <property type="match status" value="1"/>
</dbReference>
<dbReference type="Gene3D" id="6.10.160.10">
    <property type="match status" value="1"/>
</dbReference>
<dbReference type="Gene3D" id="1.10.1900.20">
    <property type="entry name" value="Ribosomal protein L20"/>
    <property type="match status" value="1"/>
</dbReference>
<dbReference type="HAMAP" id="MF_00382">
    <property type="entry name" value="Ribosomal_bL20"/>
    <property type="match status" value="1"/>
</dbReference>
<dbReference type="InterPro" id="IPR005813">
    <property type="entry name" value="Ribosomal_bL20"/>
</dbReference>
<dbReference type="InterPro" id="IPR049946">
    <property type="entry name" value="RIBOSOMAL_L20_CS"/>
</dbReference>
<dbReference type="InterPro" id="IPR035566">
    <property type="entry name" value="Ribosomal_protein_bL20_C"/>
</dbReference>
<dbReference type="NCBIfam" id="TIGR01032">
    <property type="entry name" value="rplT_bact"/>
    <property type="match status" value="1"/>
</dbReference>
<dbReference type="PANTHER" id="PTHR10986">
    <property type="entry name" value="39S RIBOSOMAL PROTEIN L20"/>
    <property type="match status" value="1"/>
</dbReference>
<dbReference type="Pfam" id="PF00453">
    <property type="entry name" value="Ribosomal_L20"/>
    <property type="match status" value="1"/>
</dbReference>
<dbReference type="PRINTS" id="PR00062">
    <property type="entry name" value="RIBOSOMALL20"/>
</dbReference>
<dbReference type="SUPFAM" id="SSF74731">
    <property type="entry name" value="Ribosomal protein L20"/>
    <property type="match status" value="1"/>
</dbReference>
<dbReference type="PROSITE" id="PS00937">
    <property type="entry name" value="RIBOSOMAL_L20"/>
    <property type="match status" value="1"/>
</dbReference>
<keyword id="KW-1185">Reference proteome</keyword>
<keyword id="KW-0687">Ribonucleoprotein</keyword>
<keyword id="KW-0689">Ribosomal protein</keyword>
<keyword id="KW-0694">RNA-binding</keyword>
<keyword id="KW-0699">rRNA-binding</keyword>
<accession>Q2YBS3</accession>
<sequence>MPRVKRGVTAHARHKKILDLAKGYRGRRKNVYRVAKEAVMKAGQYAYRDRRQKKREFRALWIARINAAARECGLSYSVFMNGLKKAEIEVDRKVLADLAVFDKPAFAKIAEQAKASLAI</sequence>
<proteinExistence type="inferred from homology"/>
<name>RL20_NITMU</name>
<comment type="function">
    <text evidence="1">Binds directly to 23S ribosomal RNA and is necessary for the in vitro assembly process of the 50S ribosomal subunit. It is not involved in the protein synthesizing functions of that subunit.</text>
</comment>
<comment type="similarity">
    <text evidence="1">Belongs to the bacterial ribosomal protein bL20 family.</text>
</comment>
<feature type="chain" id="PRO_0000243708" description="Large ribosomal subunit protein bL20">
    <location>
        <begin position="1"/>
        <end position="119"/>
    </location>
</feature>